<sequence length="104" mass="11858">MALTQQKIRIRLQAFDHGLLDQSCSKIVDTANRTNAAAVGPIPLPTRIRRYCVLRSPHVDKDSREHFETRTHRRIIDIYQPSAKTIDALMRLDLPAGVDIEVKL</sequence>
<comment type="function">
    <text evidence="1">Involved in the binding of tRNA to the ribosomes.</text>
</comment>
<comment type="subunit">
    <text evidence="1">Part of the 30S ribosomal subunit.</text>
</comment>
<comment type="similarity">
    <text evidence="1">Belongs to the universal ribosomal protein uS10 family.</text>
</comment>
<dbReference type="EMBL" id="BA000045">
    <property type="protein sequence ID" value="BAC91870.1"/>
    <property type="molecule type" value="Genomic_DNA"/>
</dbReference>
<dbReference type="RefSeq" id="NP_926875.1">
    <property type="nucleotide sequence ID" value="NC_005125.1"/>
</dbReference>
<dbReference type="RefSeq" id="WP_011143917.1">
    <property type="nucleotide sequence ID" value="NC_005125.1"/>
</dbReference>
<dbReference type="SMR" id="Q7NEF1"/>
<dbReference type="FunCoup" id="Q7NEF1">
    <property type="interactions" value="320"/>
</dbReference>
<dbReference type="STRING" id="251221.gene:10761446"/>
<dbReference type="EnsemblBacteria" id="BAC91870">
    <property type="protein sequence ID" value="BAC91870"/>
    <property type="gene ID" value="BAC91870"/>
</dbReference>
<dbReference type="KEGG" id="gvi:glr3929"/>
<dbReference type="PATRIC" id="fig|251221.4.peg.3962"/>
<dbReference type="eggNOG" id="COG0051">
    <property type="taxonomic scope" value="Bacteria"/>
</dbReference>
<dbReference type="HOGENOM" id="CLU_122625_1_3_3"/>
<dbReference type="InParanoid" id="Q7NEF1"/>
<dbReference type="OrthoDB" id="9804464at2"/>
<dbReference type="PhylomeDB" id="Q7NEF1"/>
<dbReference type="Proteomes" id="UP000000557">
    <property type="component" value="Chromosome"/>
</dbReference>
<dbReference type="GO" id="GO:0015935">
    <property type="term" value="C:small ribosomal subunit"/>
    <property type="evidence" value="ECO:0000318"/>
    <property type="project" value="GO_Central"/>
</dbReference>
<dbReference type="GO" id="GO:0003735">
    <property type="term" value="F:structural constituent of ribosome"/>
    <property type="evidence" value="ECO:0000318"/>
    <property type="project" value="GO_Central"/>
</dbReference>
<dbReference type="GO" id="GO:0000049">
    <property type="term" value="F:tRNA binding"/>
    <property type="evidence" value="ECO:0007669"/>
    <property type="project" value="UniProtKB-UniRule"/>
</dbReference>
<dbReference type="GO" id="GO:0006412">
    <property type="term" value="P:translation"/>
    <property type="evidence" value="ECO:0007669"/>
    <property type="project" value="UniProtKB-UniRule"/>
</dbReference>
<dbReference type="FunFam" id="3.30.70.600:FF:000001">
    <property type="entry name" value="30S ribosomal protein S10"/>
    <property type="match status" value="1"/>
</dbReference>
<dbReference type="Gene3D" id="3.30.70.600">
    <property type="entry name" value="Ribosomal protein S10 domain"/>
    <property type="match status" value="1"/>
</dbReference>
<dbReference type="HAMAP" id="MF_00508">
    <property type="entry name" value="Ribosomal_uS10"/>
    <property type="match status" value="1"/>
</dbReference>
<dbReference type="InterPro" id="IPR001848">
    <property type="entry name" value="Ribosomal_uS10"/>
</dbReference>
<dbReference type="InterPro" id="IPR018268">
    <property type="entry name" value="Ribosomal_uS10_CS"/>
</dbReference>
<dbReference type="InterPro" id="IPR027486">
    <property type="entry name" value="Ribosomal_uS10_dom"/>
</dbReference>
<dbReference type="InterPro" id="IPR036838">
    <property type="entry name" value="Ribosomal_uS10_dom_sf"/>
</dbReference>
<dbReference type="NCBIfam" id="NF001861">
    <property type="entry name" value="PRK00596.1"/>
    <property type="match status" value="1"/>
</dbReference>
<dbReference type="NCBIfam" id="TIGR01049">
    <property type="entry name" value="rpsJ_bact"/>
    <property type="match status" value="1"/>
</dbReference>
<dbReference type="PANTHER" id="PTHR11700">
    <property type="entry name" value="30S RIBOSOMAL PROTEIN S10 FAMILY MEMBER"/>
    <property type="match status" value="1"/>
</dbReference>
<dbReference type="Pfam" id="PF00338">
    <property type="entry name" value="Ribosomal_S10"/>
    <property type="match status" value="1"/>
</dbReference>
<dbReference type="PRINTS" id="PR00971">
    <property type="entry name" value="RIBOSOMALS10"/>
</dbReference>
<dbReference type="SMART" id="SM01403">
    <property type="entry name" value="Ribosomal_S10"/>
    <property type="match status" value="1"/>
</dbReference>
<dbReference type="SUPFAM" id="SSF54999">
    <property type="entry name" value="Ribosomal protein S10"/>
    <property type="match status" value="1"/>
</dbReference>
<dbReference type="PROSITE" id="PS00361">
    <property type="entry name" value="RIBOSOMAL_S10"/>
    <property type="match status" value="1"/>
</dbReference>
<feature type="chain" id="PRO_0000146535" description="Small ribosomal subunit protein uS10">
    <location>
        <begin position="1"/>
        <end position="104"/>
    </location>
</feature>
<accession>Q7NEF1</accession>
<gene>
    <name evidence="1" type="primary">rpsJ</name>
    <name evidence="1" type="synonym">rps10</name>
    <name type="ordered locus">glr3929</name>
</gene>
<organism>
    <name type="scientific">Gloeobacter violaceus (strain ATCC 29082 / PCC 7421)</name>
    <dbReference type="NCBI Taxonomy" id="251221"/>
    <lineage>
        <taxon>Bacteria</taxon>
        <taxon>Bacillati</taxon>
        <taxon>Cyanobacteriota</taxon>
        <taxon>Cyanophyceae</taxon>
        <taxon>Gloeobacterales</taxon>
        <taxon>Gloeobacteraceae</taxon>
        <taxon>Gloeobacter</taxon>
    </lineage>
</organism>
<keyword id="KW-1185">Reference proteome</keyword>
<keyword id="KW-0687">Ribonucleoprotein</keyword>
<keyword id="KW-0689">Ribosomal protein</keyword>
<name>RS10_GLOVI</name>
<reference key="1">
    <citation type="journal article" date="2003" name="DNA Res.">
        <title>Complete genome structure of Gloeobacter violaceus PCC 7421, a cyanobacterium that lacks thylakoids.</title>
        <authorList>
            <person name="Nakamura Y."/>
            <person name="Kaneko T."/>
            <person name="Sato S."/>
            <person name="Mimuro M."/>
            <person name="Miyashita H."/>
            <person name="Tsuchiya T."/>
            <person name="Sasamoto S."/>
            <person name="Watanabe A."/>
            <person name="Kawashima K."/>
            <person name="Kishida Y."/>
            <person name="Kiyokawa C."/>
            <person name="Kohara M."/>
            <person name="Matsumoto M."/>
            <person name="Matsuno A."/>
            <person name="Nakazaki N."/>
            <person name="Shimpo S."/>
            <person name="Takeuchi C."/>
            <person name="Yamada M."/>
            <person name="Tabata S."/>
        </authorList>
    </citation>
    <scope>NUCLEOTIDE SEQUENCE [LARGE SCALE GENOMIC DNA]</scope>
    <source>
        <strain>ATCC 29082 / PCC 7421</strain>
    </source>
</reference>
<protein>
    <recommendedName>
        <fullName evidence="1">Small ribosomal subunit protein uS10</fullName>
    </recommendedName>
    <alternativeName>
        <fullName evidence="2">30S ribosomal protein S10</fullName>
    </alternativeName>
</protein>
<proteinExistence type="inferred from homology"/>
<evidence type="ECO:0000255" key="1">
    <source>
        <dbReference type="HAMAP-Rule" id="MF_00508"/>
    </source>
</evidence>
<evidence type="ECO:0000305" key="2"/>